<protein>
    <recommendedName>
        <fullName evidence="1">Endoribonuclease YbeY</fullName>
        <ecNumber evidence="1">3.1.-.-</ecNumber>
    </recommendedName>
</protein>
<comment type="function">
    <text evidence="1">Single strand-specific metallo-endoribonuclease involved in late-stage 70S ribosome quality control and in maturation of the 3' terminus of the 16S rRNA.</text>
</comment>
<comment type="cofactor">
    <cofactor evidence="1">
        <name>Zn(2+)</name>
        <dbReference type="ChEBI" id="CHEBI:29105"/>
    </cofactor>
    <text evidence="1">Binds 1 zinc ion.</text>
</comment>
<comment type="subcellular location">
    <subcellularLocation>
        <location evidence="1">Cytoplasm</location>
    </subcellularLocation>
</comment>
<comment type="similarity">
    <text evidence="1">Belongs to the endoribonuclease YbeY family.</text>
</comment>
<gene>
    <name evidence="1" type="primary">ybeY</name>
    <name type="ordered locus">Ava_2782</name>
</gene>
<evidence type="ECO:0000255" key="1">
    <source>
        <dbReference type="HAMAP-Rule" id="MF_00009"/>
    </source>
</evidence>
<organism>
    <name type="scientific">Trichormus variabilis (strain ATCC 29413 / PCC 7937)</name>
    <name type="common">Anabaena variabilis</name>
    <dbReference type="NCBI Taxonomy" id="240292"/>
    <lineage>
        <taxon>Bacteria</taxon>
        <taxon>Bacillati</taxon>
        <taxon>Cyanobacteriota</taxon>
        <taxon>Cyanophyceae</taxon>
        <taxon>Nostocales</taxon>
        <taxon>Nostocaceae</taxon>
        <taxon>Trichormus</taxon>
    </lineage>
</organism>
<reference key="1">
    <citation type="journal article" date="2014" name="Stand. Genomic Sci.">
        <title>Complete genome sequence of Anabaena variabilis ATCC 29413.</title>
        <authorList>
            <person name="Thiel T."/>
            <person name="Pratte B.S."/>
            <person name="Zhong J."/>
            <person name="Goodwin L."/>
            <person name="Copeland A."/>
            <person name="Lucas S."/>
            <person name="Han C."/>
            <person name="Pitluck S."/>
            <person name="Land M.L."/>
            <person name="Kyrpides N.C."/>
            <person name="Woyke T."/>
        </authorList>
    </citation>
    <scope>NUCLEOTIDE SEQUENCE [LARGE SCALE GENOMIC DNA]</scope>
    <source>
        <strain>ATCC 29413 / PCC 7937</strain>
    </source>
</reference>
<feature type="chain" id="PRO_0000284155" description="Endoribonuclease YbeY">
    <location>
        <begin position="1"/>
        <end position="176"/>
    </location>
</feature>
<feature type="binding site" evidence="1">
    <location>
        <position position="138"/>
    </location>
    <ligand>
        <name>Zn(2+)</name>
        <dbReference type="ChEBI" id="CHEBI:29105"/>
        <note>catalytic</note>
    </ligand>
</feature>
<feature type="binding site" evidence="1">
    <location>
        <position position="142"/>
    </location>
    <ligand>
        <name>Zn(2+)</name>
        <dbReference type="ChEBI" id="CHEBI:29105"/>
        <note>catalytic</note>
    </ligand>
</feature>
<feature type="binding site" evidence="1">
    <location>
        <position position="148"/>
    </location>
    <ligand>
        <name>Zn(2+)</name>
        <dbReference type="ChEBI" id="CHEBI:29105"/>
        <note>catalytic</note>
    </ligand>
</feature>
<dbReference type="EC" id="3.1.-.-" evidence="1"/>
<dbReference type="EMBL" id="CP000117">
    <property type="protein sequence ID" value="ABA22395.1"/>
    <property type="molecule type" value="Genomic_DNA"/>
</dbReference>
<dbReference type="SMR" id="Q3M9E1"/>
<dbReference type="STRING" id="240292.Ava_2782"/>
<dbReference type="KEGG" id="ava:Ava_2782"/>
<dbReference type="eggNOG" id="COG0319">
    <property type="taxonomic scope" value="Bacteria"/>
</dbReference>
<dbReference type="HOGENOM" id="CLU_106710_3_0_3"/>
<dbReference type="Proteomes" id="UP000002533">
    <property type="component" value="Chromosome"/>
</dbReference>
<dbReference type="GO" id="GO:0005737">
    <property type="term" value="C:cytoplasm"/>
    <property type="evidence" value="ECO:0007669"/>
    <property type="project" value="UniProtKB-SubCell"/>
</dbReference>
<dbReference type="GO" id="GO:0004222">
    <property type="term" value="F:metalloendopeptidase activity"/>
    <property type="evidence" value="ECO:0007669"/>
    <property type="project" value="InterPro"/>
</dbReference>
<dbReference type="GO" id="GO:0004521">
    <property type="term" value="F:RNA endonuclease activity"/>
    <property type="evidence" value="ECO:0007669"/>
    <property type="project" value="UniProtKB-UniRule"/>
</dbReference>
<dbReference type="GO" id="GO:0008270">
    <property type="term" value="F:zinc ion binding"/>
    <property type="evidence" value="ECO:0007669"/>
    <property type="project" value="UniProtKB-UniRule"/>
</dbReference>
<dbReference type="GO" id="GO:0006364">
    <property type="term" value="P:rRNA processing"/>
    <property type="evidence" value="ECO:0007669"/>
    <property type="project" value="UniProtKB-UniRule"/>
</dbReference>
<dbReference type="Gene3D" id="3.40.390.30">
    <property type="entry name" value="Metalloproteases ('zincins'), catalytic domain"/>
    <property type="match status" value="1"/>
</dbReference>
<dbReference type="HAMAP" id="MF_00009">
    <property type="entry name" value="Endoribonucl_YbeY"/>
    <property type="match status" value="1"/>
</dbReference>
<dbReference type="InterPro" id="IPR023091">
    <property type="entry name" value="MetalPrtase_cat_dom_sf_prd"/>
</dbReference>
<dbReference type="InterPro" id="IPR002036">
    <property type="entry name" value="YbeY"/>
</dbReference>
<dbReference type="InterPro" id="IPR020549">
    <property type="entry name" value="YbeY_CS"/>
</dbReference>
<dbReference type="NCBIfam" id="TIGR00043">
    <property type="entry name" value="rRNA maturation RNase YbeY"/>
    <property type="match status" value="1"/>
</dbReference>
<dbReference type="PANTHER" id="PTHR46986">
    <property type="entry name" value="ENDORIBONUCLEASE YBEY, CHLOROPLASTIC"/>
    <property type="match status" value="1"/>
</dbReference>
<dbReference type="PANTHER" id="PTHR46986:SF1">
    <property type="entry name" value="ENDORIBONUCLEASE YBEY, CHLOROPLASTIC"/>
    <property type="match status" value="1"/>
</dbReference>
<dbReference type="Pfam" id="PF02130">
    <property type="entry name" value="YbeY"/>
    <property type="match status" value="1"/>
</dbReference>
<dbReference type="SUPFAM" id="SSF55486">
    <property type="entry name" value="Metalloproteases ('zincins'), catalytic domain"/>
    <property type="match status" value="1"/>
</dbReference>
<dbReference type="PROSITE" id="PS01306">
    <property type="entry name" value="UPF0054"/>
    <property type="match status" value="1"/>
</dbReference>
<proteinExistence type="inferred from homology"/>
<accession>Q3M9E1</accession>
<name>YBEY_TRIV2</name>
<keyword id="KW-0963">Cytoplasm</keyword>
<keyword id="KW-0255">Endonuclease</keyword>
<keyword id="KW-0378">Hydrolase</keyword>
<keyword id="KW-0479">Metal-binding</keyword>
<keyword id="KW-0540">Nuclease</keyword>
<keyword id="KW-0690">Ribosome biogenesis</keyword>
<keyword id="KW-0698">rRNA processing</keyword>
<keyword id="KW-0862">Zinc</keyword>
<sequence length="176" mass="19639">MVQVELDVQDCFLESSPEAAQASGYIDSQVSSATWEDWFHRWLEILDSSLPPAPSYEIGLRLTDDTEIQAINAQYRQQNKPTDVLAFAALEADLPQNPEMVAEPLYLGDIVVSINTAQRQAGQQEHSLSTELAWLTAHGLLHLLGWDHPDEESLIAMLQQQVVLLDAVGIKININY</sequence>